<keyword id="KW-0007">Acetylation</keyword>
<keyword id="KW-0106">Calcium</keyword>
<keyword id="KW-0148">Chlorophyll</keyword>
<keyword id="KW-0150">Chloroplast</keyword>
<keyword id="KW-0157">Chromophore</keyword>
<keyword id="KW-0249">Electron transport</keyword>
<keyword id="KW-0359">Herbicide resistance</keyword>
<keyword id="KW-0408">Iron</keyword>
<keyword id="KW-0460">Magnesium</keyword>
<keyword id="KW-0464">Manganese</keyword>
<keyword id="KW-0472">Membrane</keyword>
<keyword id="KW-0479">Metal-binding</keyword>
<keyword id="KW-0560">Oxidoreductase</keyword>
<keyword id="KW-0597">Phosphoprotein</keyword>
<keyword id="KW-0602">Photosynthesis</keyword>
<keyword id="KW-0604">Photosystem II</keyword>
<keyword id="KW-0934">Plastid</keyword>
<keyword id="KW-0793">Thylakoid</keyword>
<keyword id="KW-0812">Transmembrane</keyword>
<keyword id="KW-1133">Transmembrane helix</keyword>
<keyword id="KW-0813">Transport</keyword>
<reference key="1">
    <citation type="journal article" date="2007" name="Mol. Phylogenet. Evol.">
        <title>Phylogenetic and evolutionary implications of complete chloroplast genome sequences of four early-diverging angiosperms: Buxus (Buxaceae), Chloranthus (Chloranthaceae), Dioscorea (Dioscoreaceae), and Illicium (Schisandraceae).</title>
        <authorList>
            <person name="Hansen D.R."/>
            <person name="Dastidar S.G."/>
            <person name="Cai Z."/>
            <person name="Penaflor C."/>
            <person name="Kuehl J.V."/>
            <person name="Boore J.L."/>
            <person name="Jansen R.K."/>
        </authorList>
    </citation>
    <scope>NUCLEOTIDE SEQUENCE [LARGE SCALE GENOMIC DNA]</scope>
</reference>
<dbReference type="EC" id="1.10.3.9" evidence="1"/>
<dbReference type="EMBL" id="EF380351">
    <property type="protein sequence ID" value="ABQ45229.1"/>
    <property type="molecule type" value="Genomic_DNA"/>
</dbReference>
<dbReference type="RefSeq" id="YP_001294164.1">
    <property type="nucleotide sequence ID" value="NC_009599.1"/>
</dbReference>
<dbReference type="SMR" id="A6MM16"/>
<dbReference type="GeneID" id="5236866"/>
<dbReference type="GO" id="GO:0009535">
    <property type="term" value="C:chloroplast thylakoid membrane"/>
    <property type="evidence" value="ECO:0007669"/>
    <property type="project" value="UniProtKB-SubCell"/>
</dbReference>
<dbReference type="GO" id="GO:0009523">
    <property type="term" value="C:photosystem II"/>
    <property type="evidence" value="ECO:0007669"/>
    <property type="project" value="UniProtKB-KW"/>
</dbReference>
<dbReference type="GO" id="GO:0016168">
    <property type="term" value="F:chlorophyll binding"/>
    <property type="evidence" value="ECO:0007669"/>
    <property type="project" value="UniProtKB-UniRule"/>
</dbReference>
<dbReference type="GO" id="GO:0045156">
    <property type="term" value="F:electron transporter, transferring electrons within the cyclic electron transport pathway of photosynthesis activity"/>
    <property type="evidence" value="ECO:0007669"/>
    <property type="project" value="InterPro"/>
</dbReference>
<dbReference type="GO" id="GO:0005506">
    <property type="term" value="F:iron ion binding"/>
    <property type="evidence" value="ECO:0007669"/>
    <property type="project" value="UniProtKB-UniRule"/>
</dbReference>
<dbReference type="GO" id="GO:0016682">
    <property type="term" value="F:oxidoreductase activity, acting on diphenols and related substances as donors, oxygen as acceptor"/>
    <property type="evidence" value="ECO:0007669"/>
    <property type="project" value="UniProtKB-UniRule"/>
</dbReference>
<dbReference type="GO" id="GO:0010242">
    <property type="term" value="F:oxygen evolving activity"/>
    <property type="evidence" value="ECO:0007669"/>
    <property type="project" value="UniProtKB-EC"/>
</dbReference>
<dbReference type="GO" id="GO:0009772">
    <property type="term" value="P:photosynthetic electron transport in photosystem II"/>
    <property type="evidence" value="ECO:0007669"/>
    <property type="project" value="InterPro"/>
</dbReference>
<dbReference type="GO" id="GO:0009635">
    <property type="term" value="P:response to herbicide"/>
    <property type="evidence" value="ECO:0007669"/>
    <property type="project" value="UniProtKB-KW"/>
</dbReference>
<dbReference type="CDD" id="cd09289">
    <property type="entry name" value="Photosystem-II_D1"/>
    <property type="match status" value="1"/>
</dbReference>
<dbReference type="FunFam" id="1.20.85.10:FF:000002">
    <property type="entry name" value="Photosystem II protein D1"/>
    <property type="match status" value="1"/>
</dbReference>
<dbReference type="Gene3D" id="1.20.85.10">
    <property type="entry name" value="Photosystem II protein D1-like"/>
    <property type="match status" value="1"/>
</dbReference>
<dbReference type="HAMAP" id="MF_01379">
    <property type="entry name" value="PSII_PsbA_D1"/>
    <property type="match status" value="1"/>
</dbReference>
<dbReference type="InterPro" id="IPR055266">
    <property type="entry name" value="D1/D2"/>
</dbReference>
<dbReference type="InterPro" id="IPR036854">
    <property type="entry name" value="Photo_II_D1/D2_sf"/>
</dbReference>
<dbReference type="InterPro" id="IPR000484">
    <property type="entry name" value="Photo_RC_L/M"/>
</dbReference>
<dbReference type="InterPro" id="IPR055265">
    <property type="entry name" value="Photo_RC_L/M_CS"/>
</dbReference>
<dbReference type="InterPro" id="IPR005867">
    <property type="entry name" value="PSII_D1"/>
</dbReference>
<dbReference type="NCBIfam" id="TIGR01151">
    <property type="entry name" value="psbA"/>
    <property type="match status" value="1"/>
</dbReference>
<dbReference type="PANTHER" id="PTHR33149">
    <property type="entry name" value="PHOTOSYSTEM II PROTEIN D1"/>
    <property type="match status" value="1"/>
</dbReference>
<dbReference type="PANTHER" id="PTHR33149:SF55">
    <property type="entry name" value="PHOTOSYSTEM II PROTEIN D1"/>
    <property type="match status" value="1"/>
</dbReference>
<dbReference type="Pfam" id="PF00124">
    <property type="entry name" value="Photo_RC"/>
    <property type="match status" value="1"/>
</dbReference>
<dbReference type="PRINTS" id="PR00256">
    <property type="entry name" value="REACTNCENTRE"/>
</dbReference>
<dbReference type="SUPFAM" id="SSF81483">
    <property type="entry name" value="Bacterial photosystem II reaction centre, L and M subunits"/>
    <property type="match status" value="1"/>
</dbReference>
<dbReference type="PROSITE" id="PS00244">
    <property type="entry name" value="REACTION_CENTER"/>
    <property type="match status" value="1"/>
</dbReference>
<feature type="initiator methionine" description="Removed" evidence="1">
    <location>
        <position position="1"/>
    </location>
</feature>
<feature type="chain" id="PRO_0000339954" description="Photosystem II protein D1" evidence="1">
    <location>
        <begin position="2"/>
        <end position="344"/>
    </location>
</feature>
<feature type="propeptide" id="PRO_0000339955" evidence="1">
    <location>
        <begin position="345"/>
        <end position="353"/>
    </location>
</feature>
<feature type="transmembrane region" description="Helical" evidence="1">
    <location>
        <begin position="29"/>
        <end position="46"/>
    </location>
</feature>
<feature type="transmembrane region" description="Helical" evidence="1">
    <location>
        <begin position="118"/>
        <end position="133"/>
    </location>
</feature>
<feature type="transmembrane region" description="Helical" evidence="1">
    <location>
        <begin position="142"/>
        <end position="156"/>
    </location>
</feature>
<feature type="transmembrane region" description="Helical" evidence="1">
    <location>
        <begin position="197"/>
        <end position="218"/>
    </location>
</feature>
<feature type="transmembrane region" description="Helical" evidence="1">
    <location>
        <begin position="274"/>
        <end position="288"/>
    </location>
</feature>
<feature type="binding site" description="axial binding residue" evidence="1">
    <location>
        <position position="118"/>
    </location>
    <ligand>
        <name>chlorophyll a</name>
        <dbReference type="ChEBI" id="CHEBI:58416"/>
        <label>ChlzD1</label>
    </ligand>
    <ligandPart>
        <name>Mg</name>
        <dbReference type="ChEBI" id="CHEBI:25107"/>
    </ligandPart>
</feature>
<feature type="binding site" evidence="1">
    <location>
        <position position="126"/>
    </location>
    <ligand>
        <name>pheophytin a</name>
        <dbReference type="ChEBI" id="CHEBI:136840"/>
        <label>D1</label>
    </ligand>
</feature>
<feature type="binding site" evidence="1">
    <location>
        <position position="170"/>
    </location>
    <ligand>
        <name>[CaMn4O5] cluster</name>
        <dbReference type="ChEBI" id="CHEBI:189552"/>
    </ligand>
</feature>
<feature type="binding site" evidence="1">
    <location>
        <position position="189"/>
    </location>
    <ligand>
        <name>[CaMn4O5] cluster</name>
        <dbReference type="ChEBI" id="CHEBI:189552"/>
    </ligand>
</feature>
<feature type="binding site" description="axial binding residue" evidence="1">
    <location>
        <position position="198"/>
    </location>
    <ligand>
        <name>chlorophyll a</name>
        <dbReference type="ChEBI" id="CHEBI:58416"/>
        <label>PD1</label>
    </ligand>
    <ligandPart>
        <name>Mg</name>
        <dbReference type="ChEBI" id="CHEBI:25107"/>
    </ligandPart>
</feature>
<feature type="binding site" evidence="1">
    <location>
        <position position="215"/>
    </location>
    <ligand>
        <name>a quinone</name>
        <dbReference type="ChEBI" id="CHEBI:132124"/>
        <label>B</label>
    </ligand>
</feature>
<feature type="binding site" evidence="1">
    <location>
        <position position="215"/>
    </location>
    <ligand>
        <name>Fe cation</name>
        <dbReference type="ChEBI" id="CHEBI:24875"/>
        <note>ligand shared with heterodimeric partner</note>
    </ligand>
</feature>
<feature type="binding site" evidence="1">
    <location>
        <begin position="264"/>
        <end position="265"/>
    </location>
    <ligand>
        <name>a quinone</name>
        <dbReference type="ChEBI" id="CHEBI:132124"/>
        <label>B</label>
    </ligand>
</feature>
<feature type="binding site" evidence="1">
    <location>
        <position position="272"/>
    </location>
    <ligand>
        <name>Fe cation</name>
        <dbReference type="ChEBI" id="CHEBI:24875"/>
        <note>ligand shared with heterodimeric partner</note>
    </ligand>
</feature>
<feature type="binding site" evidence="1">
    <location>
        <position position="332"/>
    </location>
    <ligand>
        <name>[CaMn4O5] cluster</name>
        <dbReference type="ChEBI" id="CHEBI:189552"/>
    </ligand>
</feature>
<feature type="binding site" evidence="1">
    <location>
        <position position="333"/>
    </location>
    <ligand>
        <name>[CaMn4O5] cluster</name>
        <dbReference type="ChEBI" id="CHEBI:189552"/>
    </ligand>
</feature>
<feature type="binding site" evidence="1">
    <location>
        <position position="342"/>
    </location>
    <ligand>
        <name>[CaMn4O5] cluster</name>
        <dbReference type="ChEBI" id="CHEBI:189552"/>
    </ligand>
</feature>
<feature type="binding site" evidence="1">
    <location>
        <position position="344"/>
    </location>
    <ligand>
        <name>[CaMn4O5] cluster</name>
        <dbReference type="ChEBI" id="CHEBI:189552"/>
    </ligand>
</feature>
<feature type="site" description="Tyrosine radical intermediate" evidence="1">
    <location>
        <position position="161"/>
    </location>
</feature>
<feature type="site" description="Stabilizes free radical intermediate" evidence="1">
    <location>
        <position position="190"/>
    </location>
</feature>
<feature type="site" description="Cleavage; by CTPA" evidence="1">
    <location>
        <begin position="344"/>
        <end position="345"/>
    </location>
</feature>
<feature type="modified residue" description="N-acetylthreonine" evidence="1">
    <location>
        <position position="2"/>
    </location>
</feature>
<feature type="modified residue" description="Phosphothreonine" evidence="1">
    <location>
        <position position="2"/>
    </location>
</feature>
<sequence length="353" mass="38951">MTAILERRESESLWGRFCNWITSTENRLYIGWFGVLMIPTLLTATSVFIIAFIAAPPVDIDGIREPVSGSLLYGNNIISGAIIPTSAAIGLHFYPIWEAASVDEWLYNGGPYELIVLHFLLGVACYMGREWELSFRLGMRPWIAVAYSAPVAAATAVFLIYPIGQGSFSDGMPLGISGTFNFMIVFQAEHNILMHPFHMLGVAGVFGGSLFSAMHGSLVTSSLIRETTENESANEGYRFGQEEETYNIVAAHGYFGRLIFQYASFNNSRSLHFFLAAWPVIGIWFTALGISTMAFNLNGFNFNQSVVDSQGRVINTWADIINRANLGMEVMHERNAHNFPLDLAAVEAPSTNG</sequence>
<organism>
    <name type="scientific">Buxus microphylla</name>
    <name type="common">Littleleaf boxwood</name>
    <name type="synonym">Japanese boxwood</name>
    <dbReference type="NCBI Taxonomy" id="153571"/>
    <lineage>
        <taxon>Eukaryota</taxon>
        <taxon>Viridiplantae</taxon>
        <taxon>Streptophyta</taxon>
        <taxon>Embryophyta</taxon>
        <taxon>Tracheophyta</taxon>
        <taxon>Spermatophyta</taxon>
        <taxon>Magnoliopsida</taxon>
        <taxon>Buxales</taxon>
        <taxon>Buxaceae</taxon>
        <taxon>Buxus</taxon>
    </lineage>
</organism>
<gene>
    <name evidence="1" type="primary">psbA</name>
</gene>
<geneLocation type="chloroplast"/>
<name>PSBA_BUXMI</name>
<protein>
    <recommendedName>
        <fullName evidence="1">Photosystem II protein D1</fullName>
        <shortName evidence="1">PSII D1 protein</shortName>
        <ecNumber evidence="1">1.10.3.9</ecNumber>
    </recommendedName>
    <alternativeName>
        <fullName evidence="1">Photosystem II Q(B) protein</fullName>
    </alternativeName>
</protein>
<comment type="function">
    <text evidence="1">Photosystem II (PSII) is a light-driven water:plastoquinone oxidoreductase that uses light energy to abstract electrons from H(2)O, generating O(2) and a proton gradient subsequently used for ATP formation. It consists of a core antenna complex that captures photons, and an electron transfer chain that converts photonic excitation into a charge separation. The D1/D2 (PsbA/PsbD) reaction center heterodimer binds P680, the primary electron donor of PSII as well as several subsequent electron acceptors.</text>
</comment>
<comment type="catalytic activity">
    <reaction evidence="1">
        <text>2 a plastoquinone + 4 hnu + 2 H2O = 2 a plastoquinol + O2</text>
        <dbReference type="Rhea" id="RHEA:36359"/>
        <dbReference type="Rhea" id="RHEA-COMP:9561"/>
        <dbReference type="Rhea" id="RHEA-COMP:9562"/>
        <dbReference type="ChEBI" id="CHEBI:15377"/>
        <dbReference type="ChEBI" id="CHEBI:15379"/>
        <dbReference type="ChEBI" id="CHEBI:17757"/>
        <dbReference type="ChEBI" id="CHEBI:30212"/>
        <dbReference type="ChEBI" id="CHEBI:62192"/>
        <dbReference type="EC" id="1.10.3.9"/>
    </reaction>
</comment>
<comment type="cofactor">
    <text evidence="1">The D1/D2 heterodimer binds P680, chlorophylls that are the primary electron donor of PSII, and subsequent electron acceptors. It shares a non-heme iron and each subunit binds pheophytin, quinone, additional chlorophylls, carotenoids and lipids. D1 provides most of the ligands for the Mn4-Ca-O5 cluster of the oxygen-evolving complex (OEC). There is also a Cl(-1) ion associated with D1 and D2, which is required for oxygen evolution. The PSII complex binds additional chlorophylls, carotenoids and specific lipids.</text>
</comment>
<comment type="subunit">
    <text evidence="1">PSII is composed of 1 copy each of membrane proteins PsbA, PsbB, PsbC, PsbD, PsbE, PsbF, PsbH, PsbI, PsbJ, PsbK, PsbL, PsbM, PsbT, PsbX, PsbY, PsbZ, Psb30/Ycf12, at least 3 peripheral proteins of the oxygen-evolving complex and a large number of cofactors. It forms dimeric complexes.</text>
</comment>
<comment type="subcellular location">
    <subcellularLocation>
        <location evidence="1">Plastid</location>
        <location evidence="1">Chloroplast thylakoid membrane</location>
        <topology evidence="1">Multi-pass membrane protein</topology>
    </subcellularLocation>
</comment>
<comment type="PTM">
    <text evidence="1">Tyr-161 forms a radical intermediate that is referred to as redox-active TyrZ, YZ or Y-Z.</text>
</comment>
<comment type="PTM">
    <text evidence="1">C-terminally processed by CTPA; processing is essential to allow assembly of the oxygen-evolving complex and thus photosynthetic growth.</text>
</comment>
<comment type="miscellaneous">
    <text evidence="1">2 of the reaction center chlorophylls (ChlD1 and ChlD2) are entirely coordinated by water.</text>
</comment>
<comment type="miscellaneous">
    <text evidence="1">Herbicides such as atrazine, BNT, diuron or ioxynil bind in the Q(B) binding site and block subsequent electron transfer.</text>
</comment>
<comment type="similarity">
    <text evidence="1">Belongs to the reaction center PufL/M/PsbA/D family.</text>
</comment>
<accession>A6MM16</accession>
<evidence type="ECO:0000255" key="1">
    <source>
        <dbReference type="HAMAP-Rule" id="MF_01379"/>
    </source>
</evidence>
<proteinExistence type="inferred from homology"/>